<sequence length="814" mass="88327">MAKAAASSALEDLDLSREEVQRFTSAFQDPEFRRMFSEYAAEITDPENRRRYEEEITALERERGVDVRFVHPEPGHVLRTSLDGEHRCYVNVCSNSLVGVPSSRPGPGRGGTAAGSHWSLPYSLAPGRQYAGRNGARYTVYDVVFHPEALALARSHERFREMLDATALEAVEQQFGVRLDRRNAKTLKIKYKGMPEAAVLRTPLPGGVPAQPEGEPPGLFPDPPYPYRYPAAAAANTARSPASPAPEAVQRPEPTEPRCSVVQRHHVDLQDYRCSRDAAPSTVPHELVVTIELPLLRSVERAELEVKGKLLCLDSRNPDYRLRLSLPYPVDDGRGKAQYNKARRQLVVTLPVALADARQEPPAATPEEPAEETGTDDVARTSAGDFAAAREESADGTGADHGEKSGVGAPDPGAAHAEGELVPEPEQDFGGDSVAPLDLGKGTSPGDRSLPYSAFPGGDTESLCGDPGVQTNEEQERTRHDTAGSAMGDPGTESIAPVCPPLQCNQDEDSLTLLIQVPGILPQTLHGHLSPVGYELCFSTQDSGYSCTLQFAPENKLSTREPETSVSLNNAVIVLAKSPESHGLWREWYCGLNKESLEERLFINEENVNGFLEEVLCSPLKQARSLAPPLIEVLQATDEQVQIHAELQECSDPAGLQGKGKGVREGCPLSEAEAADQSATSPAASDSAAAVEALKINTHGSAVDLQHGCPEVPHVLSGKPLQPEAKMDPEFIRESSTTYSTEEKENIREPVISKGEKINGDHPSSLLNKTVVQNIPDFDTIKETNMQDGSVQIIRDHTTHCAFSFQNPLLYDLD</sequence>
<reference key="1">
    <citation type="journal article" date="2008" name="Nature">
        <title>Ktu/PF13 is required for cytoplasmic pre-assembly of axonemal dyneins.</title>
        <authorList>
            <person name="Omran H."/>
            <person name="Kobayashi D."/>
            <person name="Olbrich H."/>
            <person name="Tsukahara T."/>
            <person name="Loges N.T."/>
            <person name="Hagiwara H."/>
            <person name="Zhang Q."/>
            <person name="Leblond G."/>
            <person name="O'Toole E."/>
            <person name="Hara C."/>
            <person name="Mizuno H."/>
            <person name="Kawano H."/>
            <person name="Fliegauf M."/>
            <person name="Yagi T."/>
            <person name="Koshida S."/>
            <person name="Miyawaki A."/>
            <person name="Zentgraf H."/>
            <person name="Seithe H."/>
            <person name="Reinhardt R."/>
            <person name="Watanabe Y."/>
            <person name="Kamiya R."/>
            <person name="Mitchell D.R."/>
            <person name="Takeda H."/>
        </authorList>
    </citation>
    <scope>NUCLEOTIDE SEQUENCE [MRNA] (ISOFORM 1)</scope>
    <scope>TISSUE SPECIFICITY</scope>
    <scope>INTERACTION WITH DNAI2 AND HSPA1A</scope>
</reference>
<reference key="2">
    <citation type="journal article" date="2004" name="Genome Res.">
        <title>The status, quality, and expansion of the NIH full-length cDNA project: the Mammalian Gene Collection (MGC).</title>
        <authorList>
            <consortium name="The MGC Project Team"/>
        </authorList>
    </citation>
    <scope>NUCLEOTIDE SEQUENCE [LARGE SCALE MRNA] (ISOFORM 1)</scope>
    <scope>NUCLEOTIDE SEQUENCE [LARGE SCALE MRNA] OF 387-814 (ISOFORM 2)</scope>
    <source>
        <strain>C57BL/6J</strain>
        <tissue>Brain</tissue>
    </source>
</reference>
<reference key="3">
    <citation type="journal article" date="2005" name="Science">
        <title>The transcriptional landscape of the mammalian genome.</title>
        <authorList>
            <person name="Carninci P."/>
            <person name="Kasukawa T."/>
            <person name="Katayama S."/>
            <person name="Gough J."/>
            <person name="Frith M.C."/>
            <person name="Maeda N."/>
            <person name="Oyama R."/>
            <person name="Ravasi T."/>
            <person name="Lenhard B."/>
            <person name="Wells C."/>
            <person name="Kodzius R."/>
            <person name="Shimokawa K."/>
            <person name="Bajic V.B."/>
            <person name="Brenner S.E."/>
            <person name="Batalov S."/>
            <person name="Forrest A.R."/>
            <person name="Zavolan M."/>
            <person name="Davis M.J."/>
            <person name="Wilming L.G."/>
            <person name="Aidinis V."/>
            <person name="Allen J.E."/>
            <person name="Ambesi-Impiombato A."/>
            <person name="Apweiler R."/>
            <person name="Aturaliya R.N."/>
            <person name="Bailey T.L."/>
            <person name="Bansal M."/>
            <person name="Baxter L."/>
            <person name="Beisel K.W."/>
            <person name="Bersano T."/>
            <person name="Bono H."/>
            <person name="Chalk A.M."/>
            <person name="Chiu K.P."/>
            <person name="Choudhary V."/>
            <person name="Christoffels A."/>
            <person name="Clutterbuck D.R."/>
            <person name="Crowe M.L."/>
            <person name="Dalla E."/>
            <person name="Dalrymple B.P."/>
            <person name="de Bono B."/>
            <person name="Della Gatta G."/>
            <person name="di Bernardo D."/>
            <person name="Down T."/>
            <person name="Engstrom P."/>
            <person name="Fagiolini M."/>
            <person name="Faulkner G."/>
            <person name="Fletcher C.F."/>
            <person name="Fukushima T."/>
            <person name="Furuno M."/>
            <person name="Futaki S."/>
            <person name="Gariboldi M."/>
            <person name="Georgii-Hemming P."/>
            <person name="Gingeras T.R."/>
            <person name="Gojobori T."/>
            <person name="Green R.E."/>
            <person name="Gustincich S."/>
            <person name="Harbers M."/>
            <person name="Hayashi Y."/>
            <person name="Hensch T.K."/>
            <person name="Hirokawa N."/>
            <person name="Hill D."/>
            <person name="Huminiecki L."/>
            <person name="Iacono M."/>
            <person name="Ikeo K."/>
            <person name="Iwama A."/>
            <person name="Ishikawa T."/>
            <person name="Jakt M."/>
            <person name="Kanapin A."/>
            <person name="Katoh M."/>
            <person name="Kawasawa Y."/>
            <person name="Kelso J."/>
            <person name="Kitamura H."/>
            <person name="Kitano H."/>
            <person name="Kollias G."/>
            <person name="Krishnan S.P."/>
            <person name="Kruger A."/>
            <person name="Kummerfeld S.K."/>
            <person name="Kurochkin I.V."/>
            <person name="Lareau L.F."/>
            <person name="Lazarevic D."/>
            <person name="Lipovich L."/>
            <person name="Liu J."/>
            <person name="Liuni S."/>
            <person name="McWilliam S."/>
            <person name="Madan Babu M."/>
            <person name="Madera M."/>
            <person name="Marchionni L."/>
            <person name="Matsuda H."/>
            <person name="Matsuzawa S."/>
            <person name="Miki H."/>
            <person name="Mignone F."/>
            <person name="Miyake S."/>
            <person name="Morris K."/>
            <person name="Mottagui-Tabar S."/>
            <person name="Mulder N."/>
            <person name="Nakano N."/>
            <person name="Nakauchi H."/>
            <person name="Ng P."/>
            <person name="Nilsson R."/>
            <person name="Nishiguchi S."/>
            <person name="Nishikawa S."/>
            <person name="Nori F."/>
            <person name="Ohara O."/>
            <person name="Okazaki Y."/>
            <person name="Orlando V."/>
            <person name="Pang K.C."/>
            <person name="Pavan W.J."/>
            <person name="Pavesi G."/>
            <person name="Pesole G."/>
            <person name="Petrovsky N."/>
            <person name="Piazza S."/>
            <person name="Reed J."/>
            <person name="Reid J.F."/>
            <person name="Ring B.Z."/>
            <person name="Ringwald M."/>
            <person name="Rost B."/>
            <person name="Ruan Y."/>
            <person name="Salzberg S.L."/>
            <person name="Sandelin A."/>
            <person name="Schneider C."/>
            <person name="Schoenbach C."/>
            <person name="Sekiguchi K."/>
            <person name="Semple C.A."/>
            <person name="Seno S."/>
            <person name="Sessa L."/>
            <person name="Sheng Y."/>
            <person name="Shibata Y."/>
            <person name="Shimada H."/>
            <person name="Shimada K."/>
            <person name="Silva D."/>
            <person name="Sinclair B."/>
            <person name="Sperling S."/>
            <person name="Stupka E."/>
            <person name="Sugiura K."/>
            <person name="Sultana R."/>
            <person name="Takenaka Y."/>
            <person name="Taki K."/>
            <person name="Tammoja K."/>
            <person name="Tan S.L."/>
            <person name="Tang S."/>
            <person name="Taylor M.S."/>
            <person name="Tegner J."/>
            <person name="Teichmann S.A."/>
            <person name="Ueda H.R."/>
            <person name="van Nimwegen E."/>
            <person name="Verardo R."/>
            <person name="Wei C.L."/>
            <person name="Yagi K."/>
            <person name="Yamanishi H."/>
            <person name="Zabarovsky E."/>
            <person name="Zhu S."/>
            <person name="Zimmer A."/>
            <person name="Hide W."/>
            <person name="Bult C."/>
            <person name="Grimmond S.M."/>
            <person name="Teasdale R.D."/>
            <person name="Liu E.T."/>
            <person name="Brusic V."/>
            <person name="Quackenbush J."/>
            <person name="Wahlestedt C."/>
            <person name="Mattick J.S."/>
            <person name="Hume D.A."/>
            <person name="Kai C."/>
            <person name="Sasaki D."/>
            <person name="Tomaru Y."/>
            <person name="Fukuda S."/>
            <person name="Kanamori-Katayama M."/>
            <person name="Suzuki M."/>
            <person name="Aoki J."/>
            <person name="Arakawa T."/>
            <person name="Iida J."/>
            <person name="Imamura K."/>
            <person name="Itoh M."/>
            <person name="Kato T."/>
            <person name="Kawaji H."/>
            <person name="Kawagashira N."/>
            <person name="Kawashima T."/>
            <person name="Kojima M."/>
            <person name="Kondo S."/>
            <person name="Konno H."/>
            <person name="Nakano K."/>
            <person name="Ninomiya N."/>
            <person name="Nishio T."/>
            <person name="Okada M."/>
            <person name="Plessy C."/>
            <person name="Shibata K."/>
            <person name="Shiraki T."/>
            <person name="Suzuki S."/>
            <person name="Tagami M."/>
            <person name="Waki K."/>
            <person name="Watahiki A."/>
            <person name="Okamura-Oho Y."/>
            <person name="Suzuki H."/>
            <person name="Kawai J."/>
            <person name="Hayashizaki Y."/>
        </authorList>
    </citation>
    <scope>NUCLEOTIDE SEQUENCE [LARGE SCALE MRNA] OF 385-814 (ISOFORM 1)</scope>
    <source>
        <strain>C57BL/6J</strain>
        <strain>NOD</strain>
        <tissue>Embryo</tissue>
        <tissue>Spleen</tissue>
    </source>
</reference>
<reference key="4">
    <citation type="journal article" date="2010" name="Cell">
        <title>A tissue-specific atlas of mouse protein phosphorylation and expression.</title>
        <authorList>
            <person name="Huttlin E.L."/>
            <person name="Jedrychowski M.P."/>
            <person name="Elias J.E."/>
            <person name="Goswami T."/>
            <person name="Rad R."/>
            <person name="Beausoleil S.A."/>
            <person name="Villen J."/>
            <person name="Haas W."/>
            <person name="Sowa M.E."/>
            <person name="Gygi S.P."/>
        </authorList>
    </citation>
    <scope>IDENTIFICATION BY MASS SPECTROMETRY [LARGE SCALE ANALYSIS]</scope>
    <source>
        <tissue>Testis</tissue>
    </source>
</reference>
<proteinExistence type="evidence at protein level"/>
<keyword id="KW-0025">Alternative splicing</keyword>
<keyword id="KW-0963">Cytoplasm</keyword>
<keyword id="KW-0597">Phosphoprotein</keyword>
<keyword id="KW-1185">Reference proteome</keyword>
<feature type="chain" id="PRO_0000089912" description="Protein kintoun">
    <location>
        <begin position="1"/>
        <end position="814"/>
    </location>
</feature>
<feature type="region of interest" description="Disordered" evidence="4">
    <location>
        <begin position="234"/>
        <end position="259"/>
    </location>
</feature>
<feature type="region of interest" description="Disordered" evidence="4">
    <location>
        <begin position="357"/>
        <end position="490"/>
    </location>
</feature>
<feature type="region of interest" description="Disordered" evidence="4">
    <location>
        <begin position="654"/>
        <end position="686"/>
    </location>
</feature>
<feature type="compositionally biased region" description="Low complexity" evidence="4">
    <location>
        <begin position="234"/>
        <end position="246"/>
    </location>
</feature>
<feature type="compositionally biased region" description="Basic and acidic residues" evidence="4">
    <location>
        <begin position="388"/>
        <end position="404"/>
    </location>
</feature>
<feature type="compositionally biased region" description="Low complexity" evidence="4">
    <location>
        <begin position="675"/>
        <end position="686"/>
    </location>
</feature>
<feature type="modified residue" description="Phosphoserine" evidence="2">
    <location>
        <position position="444"/>
    </location>
</feature>
<feature type="modified residue" description="Phosphoserine" evidence="2">
    <location>
        <position position="618"/>
    </location>
</feature>
<feature type="splice variant" id="VSP_036538" description="In isoform 2." evidence="6">
    <location>
        <begin position="400"/>
        <end position="437"/>
    </location>
</feature>
<feature type="sequence conflict" description="In Ref. 3; BAB28455." evidence="7" ref="3">
    <original>L</original>
    <variation>Q</variation>
    <location>
        <position position="463"/>
    </location>
</feature>
<feature type="sequence conflict" description="In Ref. 3; BAE32466." evidence="7" ref="3">
    <original>S</original>
    <variation>T</variation>
    <location>
        <position position="753"/>
    </location>
</feature>
<feature type="sequence conflict" description="In Ref. 3; BAB28455." evidence="7" ref="3">
    <original>V</original>
    <variation>E</variation>
    <location>
        <position position="791"/>
    </location>
</feature>
<organism>
    <name type="scientific">Mus musculus</name>
    <name type="common">Mouse</name>
    <dbReference type="NCBI Taxonomy" id="10090"/>
    <lineage>
        <taxon>Eukaryota</taxon>
        <taxon>Metazoa</taxon>
        <taxon>Chordata</taxon>
        <taxon>Craniata</taxon>
        <taxon>Vertebrata</taxon>
        <taxon>Euteleostomi</taxon>
        <taxon>Mammalia</taxon>
        <taxon>Eutheria</taxon>
        <taxon>Euarchontoglires</taxon>
        <taxon>Glires</taxon>
        <taxon>Rodentia</taxon>
        <taxon>Myomorpha</taxon>
        <taxon>Muroidea</taxon>
        <taxon>Muridae</taxon>
        <taxon>Murinae</taxon>
        <taxon>Mus</taxon>
        <taxon>Mus</taxon>
    </lineage>
</organism>
<evidence type="ECO:0000250" key="1">
    <source>
        <dbReference type="UniProtKB" id="B1H1W9"/>
    </source>
</evidence>
<evidence type="ECO:0000250" key="2">
    <source>
        <dbReference type="UniProtKB" id="Q9NVR5"/>
    </source>
</evidence>
<evidence type="ECO:0000255" key="3">
    <source>
        <dbReference type="HAMAP-Rule" id="MF_03069"/>
    </source>
</evidence>
<evidence type="ECO:0000256" key="4">
    <source>
        <dbReference type="SAM" id="MobiDB-lite"/>
    </source>
</evidence>
<evidence type="ECO:0000269" key="5">
    <source>
    </source>
</evidence>
<evidence type="ECO:0000303" key="6">
    <source>
    </source>
</evidence>
<evidence type="ECO:0000305" key="7"/>
<protein>
    <recommendedName>
        <fullName evidence="3">Protein kintoun</fullName>
    </recommendedName>
    <alternativeName>
        <fullName evidence="3">Dynein assembly factor 2, axonemal</fullName>
    </alternativeName>
</protein>
<dbReference type="EMBL" id="AB455811">
    <property type="protein sequence ID" value="BAG75151.1"/>
    <property type="molecule type" value="mRNA"/>
</dbReference>
<dbReference type="EMBL" id="BC055807">
    <property type="protein sequence ID" value="AAH55807.1"/>
    <property type="molecule type" value="mRNA"/>
</dbReference>
<dbReference type="EMBL" id="BC058344">
    <property type="protein sequence ID" value="AAH58344.1"/>
    <property type="status" value="ALT_INIT"/>
    <property type="molecule type" value="mRNA"/>
</dbReference>
<dbReference type="EMBL" id="BC062898">
    <property type="protein sequence ID" value="AAH62898.1"/>
    <property type="molecule type" value="mRNA"/>
</dbReference>
<dbReference type="EMBL" id="AK012767">
    <property type="protein sequence ID" value="BAB28455.1"/>
    <property type="status" value="ALT_INIT"/>
    <property type="molecule type" value="mRNA"/>
</dbReference>
<dbReference type="EMBL" id="AK075648">
    <property type="protein sequence ID" value="BAC35879.1"/>
    <property type="status" value="ALT_INIT"/>
    <property type="molecule type" value="mRNA"/>
</dbReference>
<dbReference type="EMBL" id="AK154254">
    <property type="protein sequence ID" value="BAE32466.1"/>
    <property type="status" value="ALT_INIT"/>
    <property type="molecule type" value="mRNA"/>
</dbReference>
<dbReference type="EMBL" id="AK172494">
    <property type="protein sequence ID" value="BAE43032.1"/>
    <property type="status" value="ALT_INIT"/>
    <property type="molecule type" value="mRNA"/>
</dbReference>
<dbReference type="CCDS" id="CCDS25948.1">
    <molecule id="Q8BPI1-1"/>
</dbReference>
<dbReference type="RefSeq" id="NP_081545.3">
    <molecule id="Q8BPI1-1"/>
    <property type="nucleotide sequence ID" value="NM_027269.4"/>
</dbReference>
<dbReference type="SMR" id="Q8BPI1"/>
<dbReference type="BioGRID" id="224540">
    <property type="interactions" value="3"/>
</dbReference>
<dbReference type="DIP" id="DIP-59777N"/>
<dbReference type="FunCoup" id="Q8BPI1">
    <property type="interactions" value="67"/>
</dbReference>
<dbReference type="IntAct" id="Q8BPI1">
    <property type="interactions" value="6"/>
</dbReference>
<dbReference type="STRING" id="10090.ENSMUSP00000021356"/>
<dbReference type="GlyGen" id="Q8BPI1">
    <property type="glycosylation" value="2 sites, 1 O-linked glycan (1 site)"/>
</dbReference>
<dbReference type="iPTMnet" id="Q8BPI1"/>
<dbReference type="PhosphoSitePlus" id="Q8BPI1"/>
<dbReference type="SwissPalm" id="Q8BPI1"/>
<dbReference type="PaxDb" id="10090-ENSMUSP00000021356"/>
<dbReference type="ProteomicsDB" id="263680">
    <molecule id="Q8BPI1-1"/>
</dbReference>
<dbReference type="ProteomicsDB" id="263681">
    <molecule id="Q8BPI1-2"/>
</dbReference>
<dbReference type="Pumba" id="Q8BPI1"/>
<dbReference type="Antibodypedia" id="139">
    <property type="antibodies" value="36 antibodies from 13 providers"/>
</dbReference>
<dbReference type="Ensembl" id="ENSMUST00000021356.6">
    <molecule id="Q8BPI1-1"/>
    <property type="protein sequence ID" value="ENSMUSP00000021356.6"/>
    <property type="gene ID" value="ENSMUSG00000020973.8"/>
</dbReference>
<dbReference type="GeneID" id="109065"/>
<dbReference type="KEGG" id="mmu:109065"/>
<dbReference type="UCSC" id="uc007nrt.1">
    <molecule id="Q8BPI1-1"/>
    <property type="organism name" value="mouse"/>
</dbReference>
<dbReference type="AGR" id="MGI:1923566"/>
<dbReference type="CTD" id="55172"/>
<dbReference type="MGI" id="MGI:1923566">
    <property type="gene designation" value="Dnaaf2"/>
</dbReference>
<dbReference type="VEuPathDB" id="HostDB:ENSMUSG00000020973"/>
<dbReference type="eggNOG" id="KOG4356">
    <property type="taxonomic scope" value="Eukaryota"/>
</dbReference>
<dbReference type="GeneTree" id="ENSGT00510000048466"/>
<dbReference type="HOGENOM" id="CLU_018349_0_0_1"/>
<dbReference type="InParanoid" id="Q8BPI1"/>
<dbReference type="OMA" id="KQCMSLT"/>
<dbReference type="OrthoDB" id="546764at2759"/>
<dbReference type="PhylomeDB" id="Q8BPI1"/>
<dbReference type="TreeFam" id="TF336215"/>
<dbReference type="BioGRID-ORCS" id="109065">
    <property type="hits" value="0 hits in 76 CRISPR screens"/>
</dbReference>
<dbReference type="ChiTaRS" id="Dnaaf2">
    <property type="organism name" value="mouse"/>
</dbReference>
<dbReference type="PRO" id="PR:Q8BPI1"/>
<dbReference type="Proteomes" id="UP000000589">
    <property type="component" value="Chromosome 12"/>
</dbReference>
<dbReference type="RNAct" id="Q8BPI1">
    <property type="molecule type" value="protein"/>
</dbReference>
<dbReference type="Bgee" id="ENSMUSG00000020973">
    <property type="expression patterns" value="Expressed in cerebral cortex ventricular layer and 89 other cell types or tissues"/>
</dbReference>
<dbReference type="GO" id="GO:0036064">
    <property type="term" value="C:ciliary basal body"/>
    <property type="evidence" value="ECO:0000266"/>
    <property type="project" value="MGI"/>
</dbReference>
<dbReference type="GO" id="GO:0005737">
    <property type="term" value="C:cytoplasm"/>
    <property type="evidence" value="ECO:0000314"/>
    <property type="project" value="MGI"/>
</dbReference>
<dbReference type="GO" id="GO:0005829">
    <property type="term" value="C:cytosol"/>
    <property type="evidence" value="ECO:0007669"/>
    <property type="project" value="Ensembl"/>
</dbReference>
<dbReference type="GO" id="GO:0120293">
    <property type="term" value="C:dynein axonemal particle"/>
    <property type="evidence" value="ECO:0000250"/>
    <property type="project" value="UniProtKB"/>
</dbReference>
<dbReference type="GO" id="GO:0005576">
    <property type="term" value="C:extracellular region"/>
    <property type="evidence" value="ECO:0007669"/>
    <property type="project" value="GOC"/>
</dbReference>
<dbReference type="GO" id="GO:0005794">
    <property type="term" value="C:Golgi apparatus"/>
    <property type="evidence" value="ECO:0007669"/>
    <property type="project" value="Ensembl"/>
</dbReference>
<dbReference type="GO" id="GO:0005730">
    <property type="term" value="C:nucleolus"/>
    <property type="evidence" value="ECO:0007669"/>
    <property type="project" value="Ensembl"/>
</dbReference>
<dbReference type="GO" id="GO:0005654">
    <property type="term" value="C:nucleoplasm"/>
    <property type="evidence" value="ECO:0007669"/>
    <property type="project" value="Ensembl"/>
</dbReference>
<dbReference type="GO" id="GO:0101031">
    <property type="term" value="C:protein folding chaperone complex"/>
    <property type="evidence" value="ECO:0007669"/>
    <property type="project" value="Ensembl"/>
</dbReference>
<dbReference type="GO" id="GO:0070286">
    <property type="term" value="P:axonemal dynein complex assembly"/>
    <property type="evidence" value="ECO:0000250"/>
    <property type="project" value="UniProtKB"/>
</dbReference>
<dbReference type="GO" id="GO:0060285">
    <property type="term" value="P:cilium-dependent cell motility"/>
    <property type="evidence" value="ECO:0000250"/>
    <property type="project" value="UniProtKB"/>
</dbReference>
<dbReference type="GO" id="GO:0003351">
    <property type="term" value="P:epithelial cilium movement involved in extracellular fluid movement"/>
    <property type="evidence" value="ECO:0000315"/>
    <property type="project" value="MGI"/>
</dbReference>
<dbReference type="GO" id="GO:0061966">
    <property type="term" value="P:establishment of left/right asymmetry"/>
    <property type="evidence" value="ECO:0000315"/>
    <property type="project" value="MGI"/>
</dbReference>
<dbReference type="GO" id="GO:0051649">
    <property type="term" value="P:establishment of localization in cell"/>
    <property type="evidence" value="ECO:0000315"/>
    <property type="project" value="MGI"/>
</dbReference>
<dbReference type="GO" id="GO:0001701">
    <property type="term" value="P:in utero embryonic development"/>
    <property type="evidence" value="ECO:0000315"/>
    <property type="project" value="MGI"/>
</dbReference>
<dbReference type="GO" id="GO:0036159">
    <property type="term" value="P:inner dynein arm assembly"/>
    <property type="evidence" value="ECO:0000315"/>
    <property type="project" value="MGI"/>
</dbReference>
<dbReference type="GO" id="GO:0036158">
    <property type="term" value="P:outer dynein arm assembly"/>
    <property type="evidence" value="ECO:0000315"/>
    <property type="project" value="MGI"/>
</dbReference>
<dbReference type="GO" id="GO:0032526">
    <property type="term" value="P:response to retinoic acid"/>
    <property type="evidence" value="ECO:0000314"/>
    <property type="project" value="MGI"/>
</dbReference>
<dbReference type="CDD" id="cd00298">
    <property type="entry name" value="ACD_sHsps_p23-like"/>
    <property type="match status" value="1"/>
</dbReference>
<dbReference type="HAMAP" id="MF_03069">
    <property type="entry name" value="Kintoun"/>
    <property type="match status" value="1"/>
</dbReference>
<dbReference type="InterPro" id="IPR034727">
    <property type="entry name" value="Kintoun"/>
</dbReference>
<dbReference type="InterPro" id="IPR050734">
    <property type="entry name" value="PIH1/Kintoun_subfamily"/>
</dbReference>
<dbReference type="InterPro" id="IPR012981">
    <property type="entry name" value="PIH1_N"/>
</dbReference>
<dbReference type="InterPro" id="IPR041442">
    <property type="entry name" value="PIH1D1/2/3_CS-like"/>
</dbReference>
<dbReference type="PANTHER" id="PTHR22997">
    <property type="entry name" value="PIH1 DOMAIN-CONTAINING PROTEIN 1"/>
    <property type="match status" value="1"/>
</dbReference>
<dbReference type="PANTHER" id="PTHR22997:SF3">
    <property type="entry name" value="PROTEIN KINTOUN"/>
    <property type="match status" value="1"/>
</dbReference>
<dbReference type="Pfam" id="PF08190">
    <property type="entry name" value="PIH1"/>
    <property type="match status" value="1"/>
</dbReference>
<dbReference type="Pfam" id="PF18201">
    <property type="entry name" value="PIH1_CS"/>
    <property type="match status" value="1"/>
</dbReference>
<gene>
    <name evidence="3" type="primary">Dnaaf2</name>
    <name evidence="3" type="synonym">Ktu</name>
</gene>
<accession>Q8BPI1</accession>
<accession>Q3T9I8</accession>
<accession>Q3U4G5</accession>
<accession>Q6P5G9</accession>
<accession>Q9CZC7</accession>
<name>KTU_MOUSE</name>
<comment type="function">
    <text evidence="3">Required for cytoplasmic pre-assembly of axonemal dyneins, thereby playing a central role in motility in cilia and flagella. Involved in pre-assembly of dynein arm complexes in the cytoplasm before intraflagellar transport loads them for the ciliary compartment.</text>
</comment>
<comment type="subunit">
    <text evidence="3 5">Interacts with DNAI2 and HSPA1A (PubMed:19052621). Interacts with CFAP300. Interacts with DNAAF4. Interacts with DNAAF6/PIH1D3 (By similarity).</text>
</comment>
<comment type="interaction">
    <interactant intactId="EBI-15744709">
        <id>Q8BPI1</id>
    </interactant>
    <interactant intactId="EBI-15744757">
        <id>A2AC93</id>
        <label>Dnai2</label>
    </interactant>
    <organismsDiffer>false</organismsDiffer>
    <experiments>2</experiments>
</comment>
<comment type="subcellular location">
    <subcellularLocation>
        <location evidence="3">Cytoplasm</location>
    </subcellularLocation>
    <subcellularLocation>
        <location evidence="1">Dynein axonemal particle</location>
    </subcellularLocation>
    <text evidence="3">Localizes in the apical cytoplasm around the gamma-tubulin-positive pericentriolar region, not in the cilia.</text>
</comment>
<comment type="alternative products">
    <event type="alternative splicing"/>
    <isoform>
        <id>Q8BPI1-1</id>
        <name>1</name>
        <sequence type="displayed"/>
    </isoform>
    <isoform>
        <id>Q8BPI1-2</id>
        <name>2</name>
        <sequence type="described" ref="VSP_036538"/>
    </isoform>
</comment>
<comment type="tissue specificity">
    <text evidence="5">Expressed in nearly all organs of adult, with higher expression in tissues known to have motile cilia and flagella, such as brain and testis.</text>
</comment>
<comment type="similarity">
    <text evidence="3">Belongs to the PIH1 family. Kintoun subfamily.</text>
</comment>
<comment type="sequence caution" evidence="7">
    <conflict type="erroneous initiation">
        <sequence resource="EMBL-CDS" id="AAH58344"/>
    </conflict>
    <text>Truncated N-terminus.</text>
</comment>
<comment type="sequence caution" evidence="7">
    <conflict type="erroneous initiation">
        <sequence resource="EMBL-CDS" id="BAB28455"/>
    </conflict>
    <text>Truncated N-terminus.</text>
</comment>
<comment type="sequence caution" evidence="7">
    <conflict type="erroneous initiation">
        <sequence resource="EMBL-CDS" id="BAC35879"/>
    </conflict>
    <text>Truncated N-terminus.</text>
</comment>
<comment type="sequence caution" evidence="7">
    <conflict type="erroneous initiation">
        <sequence resource="EMBL-CDS" id="BAE32466"/>
    </conflict>
    <text>Truncated N-terminus.</text>
</comment>
<comment type="sequence caution" evidence="7">
    <conflict type="erroneous initiation">
        <sequence resource="EMBL-CDS" id="BAE43032"/>
    </conflict>
    <text>Truncated N-terminus.</text>
</comment>